<organism>
    <name type="scientific">Staphylococcus aureus (strain USA300 / TCH1516)</name>
    <dbReference type="NCBI Taxonomy" id="451516"/>
    <lineage>
        <taxon>Bacteria</taxon>
        <taxon>Bacillati</taxon>
        <taxon>Bacillota</taxon>
        <taxon>Bacilli</taxon>
        <taxon>Bacillales</taxon>
        <taxon>Staphylococcaceae</taxon>
        <taxon>Staphylococcus</taxon>
    </lineage>
</organism>
<sequence>MKKIVLYGGQFNPIHTAHMIVASEVFHELQPDEFYFLPSFMSPLKKHHDFIDVQHRLTMIQMIIDELGFGDICDDEIKRGGQSYTYDTIKAFKEQHKDSELYFVIGTDQYNQLEKWYQIEYLKEMVTFVVVNRDKNSQNVENAMIAIQIPRVDISSTMIRQRVSEGKSIQVLVPKSVENYIKGEGLYEH</sequence>
<gene>
    <name evidence="1" type="primary">nadD</name>
    <name type="ordered locus">USA300HOU_1595</name>
</gene>
<keyword id="KW-0067">ATP-binding</keyword>
<keyword id="KW-0520">NAD</keyword>
<keyword id="KW-0547">Nucleotide-binding</keyword>
<keyword id="KW-0548">Nucleotidyltransferase</keyword>
<keyword id="KW-0662">Pyridine nucleotide biosynthesis</keyword>
<keyword id="KW-0808">Transferase</keyword>
<evidence type="ECO:0000255" key="1">
    <source>
        <dbReference type="HAMAP-Rule" id="MF_00244"/>
    </source>
</evidence>
<comment type="function">
    <text evidence="1">Catalyzes the reversible adenylation of nicotinate mononucleotide (NaMN) to nicotinic acid adenine dinucleotide (NaAD).</text>
</comment>
<comment type="catalytic activity">
    <reaction evidence="1">
        <text>nicotinate beta-D-ribonucleotide + ATP + H(+) = deamido-NAD(+) + diphosphate</text>
        <dbReference type="Rhea" id="RHEA:22860"/>
        <dbReference type="ChEBI" id="CHEBI:15378"/>
        <dbReference type="ChEBI" id="CHEBI:30616"/>
        <dbReference type="ChEBI" id="CHEBI:33019"/>
        <dbReference type="ChEBI" id="CHEBI:57502"/>
        <dbReference type="ChEBI" id="CHEBI:58437"/>
        <dbReference type="EC" id="2.7.7.18"/>
    </reaction>
</comment>
<comment type="pathway">
    <text evidence="1">Cofactor biosynthesis; NAD(+) biosynthesis; deamido-NAD(+) from nicotinate D-ribonucleotide: step 1/1.</text>
</comment>
<comment type="similarity">
    <text evidence="1">Belongs to the NadD family.</text>
</comment>
<proteinExistence type="inferred from homology"/>
<protein>
    <recommendedName>
        <fullName evidence="1">Probable nicotinate-nucleotide adenylyltransferase</fullName>
        <ecNumber evidence="1">2.7.7.18</ecNumber>
    </recommendedName>
    <alternativeName>
        <fullName evidence="1">Deamido-NAD(+) diphosphorylase</fullName>
    </alternativeName>
    <alternativeName>
        <fullName evidence="1">Deamido-NAD(+) pyrophosphorylase</fullName>
    </alternativeName>
    <alternativeName>
        <fullName evidence="1">Nicotinate mononucleotide adenylyltransferase</fullName>
        <shortName evidence="1">NaMN adenylyltransferase</shortName>
    </alternativeName>
</protein>
<name>NADD_STAAT</name>
<feature type="chain" id="PRO_1000078395" description="Probable nicotinate-nucleotide adenylyltransferase">
    <location>
        <begin position="1"/>
        <end position="189"/>
    </location>
</feature>
<dbReference type="EC" id="2.7.7.18" evidence="1"/>
<dbReference type="EMBL" id="CP000730">
    <property type="protein sequence ID" value="ABX29602.1"/>
    <property type="molecule type" value="Genomic_DNA"/>
</dbReference>
<dbReference type="RefSeq" id="WP_000725162.1">
    <property type="nucleotide sequence ID" value="NC_010079.1"/>
</dbReference>
<dbReference type="SMR" id="A8Z4D3"/>
<dbReference type="KEGG" id="sax:USA300HOU_1595"/>
<dbReference type="HOGENOM" id="CLU_069765_3_1_9"/>
<dbReference type="UniPathway" id="UPA00253">
    <property type="reaction ID" value="UER00332"/>
</dbReference>
<dbReference type="GO" id="GO:0005524">
    <property type="term" value="F:ATP binding"/>
    <property type="evidence" value="ECO:0007669"/>
    <property type="project" value="UniProtKB-KW"/>
</dbReference>
<dbReference type="GO" id="GO:0004515">
    <property type="term" value="F:nicotinate-nucleotide adenylyltransferase activity"/>
    <property type="evidence" value="ECO:0007669"/>
    <property type="project" value="UniProtKB-UniRule"/>
</dbReference>
<dbReference type="GO" id="GO:0009435">
    <property type="term" value="P:NAD biosynthetic process"/>
    <property type="evidence" value="ECO:0007669"/>
    <property type="project" value="UniProtKB-UniRule"/>
</dbReference>
<dbReference type="CDD" id="cd02165">
    <property type="entry name" value="NMNAT"/>
    <property type="match status" value="1"/>
</dbReference>
<dbReference type="FunFam" id="3.40.50.620:FF:000189">
    <property type="entry name" value="Probable nicotinate-nucleotide adenylyltransferase"/>
    <property type="match status" value="1"/>
</dbReference>
<dbReference type="Gene3D" id="3.40.50.620">
    <property type="entry name" value="HUPs"/>
    <property type="match status" value="1"/>
</dbReference>
<dbReference type="HAMAP" id="MF_00244">
    <property type="entry name" value="NaMN_adenylyltr"/>
    <property type="match status" value="1"/>
</dbReference>
<dbReference type="InterPro" id="IPR004821">
    <property type="entry name" value="Cyt_trans-like"/>
</dbReference>
<dbReference type="InterPro" id="IPR005248">
    <property type="entry name" value="NadD/NMNAT"/>
</dbReference>
<dbReference type="InterPro" id="IPR014729">
    <property type="entry name" value="Rossmann-like_a/b/a_fold"/>
</dbReference>
<dbReference type="NCBIfam" id="TIGR00482">
    <property type="entry name" value="nicotinate (nicotinamide) nucleotide adenylyltransferase"/>
    <property type="match status" value="1"/>
</dbReference>
<dbReference type="NCBIfam" id="NF000840">
    <property type="entry name" value="PRK00071.1-3"/>
    <property type="match status" value="1"/>
</dbReference>
<dbReference type="NCBIfam" id="NF000841">
    <property type="entry name" value="PRK00071.1-4"/>
    <property type="match status" value="1"/>
</dbReference>
<dbReference type="PANTHER" id="PTHR39321">
    <property type="entry name" value="NICOTINATE-NUCLEOTIDE ADENYLYLTRANSFERASE-RELATED"/>
    <property type="match status" value="1"/>
</dbReference>
<dbReference type="PANTHER" id="PTHR39321:SF3">
    <property type="entry name" value="PHOSPHOPANTETHEINE ADENYLYLTRANSFERASE"/>
    <property type="match status" value="1"/>
</dbReference>
<dbReference type="Pfam" id="PF01467">
    <property type="entry name" value="CTP_transf_like"/>
    <property type="match status" value="1"/>
</dbReference>
<dbReference type="SUPFAM" id="SSF52374">
    <property type="entry name" value="Nucleotidylyl transferase"/>
    <property type="match status" value="1"/>
</dbReference>
<accession>A8Z4D3</accession>
<reference key="1">
    <citation type="journal article" date="2007" name="BMC Microbiol.">
        <title>Subtle genetic changes enhance virulence of methicillin resistant and sensitive Staphylococcus aureus.</title>
        <authorList>
            <person name="Highlander S.K."/>
            <person name="Hulten K.G."/>
            <person name="Qin X."/>
            <person name="Jiang H."/>
            <person name="Yerrapragada S."/>
            <person name="Mason E.O. Jr."/>
            <person name="Shang Y."/>
            <person name="Williams T.M."/>
            <person name="Fortunov R.M."/>
            <person name="Liu Y."/>
            <person name="Igboeli O."/>
            <person name="Petrosino J."/>
            <person name="Tirumalai M."/>
            <person name="Uzman A."/>
            <person name="Fox G.E."/>
            <person name="Cardenas A.M."/>
            <person name="Muzny D.M."/>
            <person name="Hemphill L."/>
            <person name="Ding Y."/>
            <person name="Dugan S."/>
            <person name="Blyth P.R."/>
            <person name="Buhay C.J."/>
            <person name="Dinh H.H."/>
            <person name="Hawes A.C."/>
            <person name="Holder M."/>
            <person name="Kovar C.L."/>
            <person name="Lee S.L."/>
            <person name="Liu W."/>
            <person name="Nazareth L.V."/>
            <person name="Wang Q."/>
            <person name="Zhou J."/>
            <person name="Kaplan S.L."/>
            <person name="Weinstock G.M."/>
        </authorList>
    </citation>
    <scope>NUCLEOTIDE SEQUENCE [LARGE SCALE GENOMIC DNA]</scope>
    <source>
        <strain>USA300 / TCH1516</strain>
    </source>
</reference>